<name>HIS7_SALRD</name>
<protein>
    <recommendedName>
        <fullName evidence="1">Imidazoleglycerol-phosphate dehydratase</fullName>
        <shortName evidence="1">IGPD</shortName>
        <ecNumber evidence="1">4.2.1.19</ecNumber>
    </recommendedName>
</protein>
<comment type="catalytic activity">
    <reaction evidence="1">
        <text>D-erythro-1-(imidazol-4-yl)glycerol 3-phosphate = 3-(imidazol-4-yl)-2-oxopropyl phosphate + H2O</text>
        <dbReference type="Rhea" id="RHEA:11040"/>
        <dbReference type="ChEBI" id="CHEBI:15377"/>
        <dbReference type="ChEBI" id="CHEBI:57766"/>
        <dbReference type="ChEBI" id="CHEBI:58278"/>
        <dbReference type="EC" id="4.2.1.19"/>
    </reaction>
</comment>
<comment type="pathway">
    <text evidence="1">Amino-acid biosynthesis; L-histidine biosynthesis; L-histidine from 5-phospho-alpha-D-ribose 1-diphosphate: step 6/9.</text>
</comment>
<comment type="subcellular location">
    <subcellularLocation>
        <location evidence="1">Cytoplasm</location>
    </subcellularLocation>
</comment>
<comment type="similarity">
    <text evidence="1">Belongs to the imidazoleglycerol-phosphate dehydratase family.</text>
</comment>
<accession>Q2S2A1</accession>
<keyword id="KW-0028">Amino-acid biosynthesis</keyword>
<keyword id="KW-0963">Cytoplasm</keyword>
<keyword id="KW-0368">Histidine biosynthesis</keyword>
<keyword id="KW-0456">Lyase</keyword>
<keyword id="KW-1185">Reference proteome</keyword>
<feature type="chain" id="PRO_0000336344" description="Imidazoleglycerol-phosphate dehydratase">
    <location>
        <begin position="1"/>
        <end position="202"/>
    </location>
</feature>
<dbReference type="EC" id="4.2.1.19" evidence="1"/>
<dbReference type="EMBL" id="CP000159">
    <property type="protein sequence ID" value="ABC44540.1"/>
    <property type="molecule type" value="Genomic_DNA"/>
</dbReference>
<dbReference type="RefSeq" id="WP_011404306.1">
    <property type="nucleotide sequence ID" value="NC_007677.1"/>
</dbReference>
<dbReference type="RefSeq" id="YP_445680.1">
    <property type="nucleotide sequence ID" value="NC_007677.1"/>
</dbReference>
<dbReference type="SMR" id="Q2S2A1"/>
<dbReference type="STRING" id="309807.SRU_1559"/>
<dbReference type="EnsemblBacteria" id="ABC44540">
    <property type="protein sequence ID" value="ABC44540"/>
    <property type="gene ID" value="SRU_1559"/>
</dbReference>
<dbReference type="KEGG" id="sru:SRU_1559"/>
<dbReference type="PATRIC" id="fig|309807.25.peg.1613"/>
<dbReference type="eggNOG" id="COG0131">
    <property type="taxonomic scope" value="Bacteria"/>
</dbReference>
<dbReference type="HOGENOM" id="CLU_044308_3_0_10"/>
<dbReference type="OrthoDB" id="9790411at2"/>
<dbReference type="UniPathway" id="UPA00031">
    <property type="reaction ID" value="UER00011"/>
</dbReference>
<dbReference type="Proteomes" id="UP000008674">
    <property type="component" value="Chromosome"/>
</dbReference>
<dbReference type="GO" id="GO:0005737">
    <property type="term" value="C:cytoplasm"/>
    <property type="evidence" value="ECO:0007669"/>
    <property type="project" value="UniProtKB-SubCell"/>
</dbReference>
<dbReference type="GO" id="GO:0004424">
    <property type="term" value="F:imidazoleglycerol-phosphate dehydratase activity"/>
    <property type="evidence" value="ECO:0007669"/>
    <property type="project" value="UniProtKB-UniRule"/>
</dbReference>
<dbReference type="GO" id="GO:0000105">
    <property type="term" value="P:L-histidine biosynthetic process"/>
    <property type="evidence" value="ECO:0007669"/>
    <property type="project" value="UniProtKB-UniRule"/>
</dbReference>
<dbReference type="CDD" id="cd07914">
    <property type="entry name" value="IGPD"/>
    <property type="match status" value="1"/>
</dbReference>
<dbReference type="FunFam" id="3.30.230.40:FF:000001">
    <property type="entry name" value="Imidazoleglycerol-phosphate dehydratase HisB"/>
    <property type="match status" value="1"/>
</dbReference>
<dbReference type="FunFam" id="3.30.230.40:FF:000003">
    <property type="entry name" value="Imidazoleglycerol-phosphate dehydratase HisB"/>
    <property type="match status" value="1"/>
</dbReference>
<dbReference type="Gene3D" id="3.30.230.40">
    <property type="entry name" value="Imidazole glycerol phosphate dehydratase, domain 1"/>
    <property type="match status" value="2"/>
</dbReference>
<dbReference type="HAMAP" id="MF_00076">
    <property type="entry name" value="HisB"/>
    <property type="match status" value="1"/>
</dbReference>
<dbReference type="InterPro" id="IPR038494">
    <property type="entry name" value="IGPD_sf"/>
</dbReference>
<dbReference type="InterPro" id="IPR000807">
    <property type="entry name" value="ImidazoleglycerolP_deHydtase"/>
</dbReference>
<dbReference type="InterPro" id="IPR020565">
    <property type="entry name" value="ImidazoleglycerP_deHydtase_CS"/>
</dbReference>
<dbReference type="InterPro" id="IPR020568">
    <property type="entry name" value="Ribosomal_Su5_D2-typ_SF"/>
</dbReference>
<dbReference type="NCBIfam" id="NF002111">
    <property type="entry name" value="PRK00951.2-1"/>
    <property type="match status" value="1"/>
</dbReference>
<dbReference type="NCBIfam" id="NF002114">
    <property type="entry name" value="PRK00951.2-4"/>
    <property type="match status" value="1"/>
</dbReference>
<dbReference type="NCBIfam" id="NF002116">
    <property type="entry name" value="PRK00951.2-6"/>
    <property type="match status" value="1"/>
</dbReference>
<dbReference type="PANTHER" id="PTHR23133:SF2">
    <property type="entry name" value="IMIDAZOLEGLYCEROL-PHOSPHATE DEHYDRATASE"/>
    <property type="match status" value="1"/>
</dbReference>
<dbReference type="PANTHER" id="PTHR23133">
    <property type="entry name" value="IMIDAZOLEGLYCEROL-PHOSPHATE DEHYDRATASE HIS7"/>
    <property type="match status" value="1"/>
</dbReference>
<dbReference type="Pfam" id="PF00475">
    <property type="entry name" value="IGPD"/>
    <property type="match status" value="1"/>
</dbReference>
<dbReference type="SUPFAM" id="SSF54211">
    <property type="entry name" value="Ribosomal protein S5 domain 2-like"/>
    <property type="match status" value="2"/>
</dbReference>
<dbReference type="PROSITE" id="PS00955">
    <property type="entry name" value="IGP_DEHYDRATASE_2"/>
    <property type="match status" value="1"/>
</dbReference>
<gene>
    <name evidence="1" type="primary">hisB</name>
    <name type="ordered locus">SRU_1559</name>
</gene>
<proteinExistence type="inferred from homology"/>
<organism>
    <name type="scientific">Salinibacter ruber (strain DSM 13855 / M31)</name>
    <dbReference type="NCBI Taxonomy" id="309807"/>
    <lineage>
        <taxon>Bacteria</taxon>
        <taxon>Pseudomonadati</taxon>
        <taxon>Rhodothermota</taxon>
        <taxon>Rhodothermia</taxon>
        <taxon>Rhodothermales</taxon>
        <taxon>Salinibacteraceae</taxon>
        <taxon>Salinibacter</taxon>
    </lineage>
</organism>
<sequence length="202" mass="21892">MSTPSFSPRTATVERTTAETDVSVALTLDGDGSYDVDTGVGFFDHMLSLFAKHGALDLEVRCDGDLEVDDHHTVEDVAIGLGRALDDALGDKAHIARYGHAYVPMDDALARAVVDLSGRSYCHLEASFERNQVGGLSTELVEHVWRSVADHARCNLHLTVLRGHNAHHKIEALFKAAARALRTAVRRRADHAEVASTKGTLA</sequence>
<reference key="1">
    <citation type="journal article" date="2005" name="Proc. Natl. Acad. Sci. U.S.A.">
        <title>The genome of Salinibacter ruber: convergence and gene exchange among hyperhalophilic bacteria and archaea.</title>
        <authorList>
            <person name="Mongodin E.F."/>
            <person name="Nelson K.E."/>
            <person name="Daugherty S."/>
            <person name="DeBoy R.T."/>
            <person name="Wister J."/>
            <person name="Khouri H."/>
            <person name="Weidman J."/>
            <person name="Walsh D.A."/>
            <person name="Papke R.T."/>
            <person name="Sanchez Perez G."/>
            <person name="Sharma A.K."/>
            <person name="Nesbo C.L."/>
            <person name="MacLeod D."/>
            <person name="Bapteste E."/>
            <person name="Doolittle W.F."/>
            <person name="Charlebois R.L."/>
            <person name="Legault B."/>
            <person name="Rodriguez-Valera F."/>
        </authorList>
    </citation>
    <scope>NUCLEOTIDE SEQUENCE [LARGE SCALE GENOMIC DNA]</scope>
    <source>
        <strain>DSM 13855 / CECT 5946 / M31</strain>
    </source>
</reference>
<evidence type="ECO:0000255" key="1">
    <source>
        <dbReference type="HAMAP-Rule" id="MF_00076"/>
    </source>
</evidence>